<comment type="function">
    <text evidence="1">Aspartyl-tRNA synthetase with relaxed tRNA specificity since it is able to aspartylate not only its cognate tRNA(Asp) but also tRNA(Asn). Reaction proceeds in two steps: L-aspartate is first activated by ATP to form Asp-AMP and then transferred to the acceptor end of tRNA(Asp/Asn).</text>
</comment>
<comment type="catalytic activity">
    <reaction evidence="1">
        <text>tRNA(Asx) + L-aspartate + ATP = L-aspartyl-tRNA(Asx) + AMP + diphosphate</text>
        <dbReference type="Rhea" id="RHEA:18349"/>
        <dbReference type="Rhea" id="RHEA-COMP:9710"/>
        <dbReference type="Rhea" id="RHEA-COMP:9711"/>
        <dbReference type="ChEBI" id="CHEBI:29991"/>
        <dbReference type="ChEBI" id="CHEBI:30616"/>
        <dbReference type="ChEBI" id="CHEBI:33019"/>
        <dbReference type="ChEBI" id="CHEBI:78442"/>
        <dbReference type="ChEBI" id="CHEBI:78516"/>
        <dbReference type="ChEBI" id="CHEBI:456215"/>
        <dbReference type="EC" id="6.1.1.23"/>
    </reaction>
</comment>
<comment type="subunit">
    <text evidence="1">Homodimer.</text>
</comment>
<comment type="subcellular location">
    <subcellularLocation>
        <location evidence="1">Cytoplasm</location>
    </subcellularLocation>
</comment>
<comment type="similarity">
    <text evidence="1">Belongs to the class-II aminoacyl-tRNA synthetase family. Type 1 subfamily.</text>
</comment>
<evidence type="ECO:0000255" key="1">
    <source>
        <dbReference type="HAMAP-Rule" id="MF_00044"/>
    </source>
</evidence>
<proteinExistence type="inferred from homology"/>
<organism>
    <name type="scientific">Bordetella pertussis (strain Tohama I / ATCC BAA-589 / NCTC 13251)</name>
    <dbReference type="NCBI Taxonomy" id="257313"/>
    <lineage>
        <taxon>Bacteria</taxon>
        <taxon>Pseudomonadati</taxon>
        <taxon>Pseudomonadota</taxon>
        <taxon>Betaproteobacteria</taxon>
        <taxon>Burkholderiales</taxon>
        <taxon>Alcaligenaceae</taxon>
        <taxon>Bordetella</taxon>
    </lineage>
</organism>
<keyword id="KW-0030">Aminoacyl-tRNA synthetase</keyword>
<keyword id="KW-0067">ATP-binding</keyword>
<keyword id="KW-0963">Cytoplasm</keyword>
<keyword id="KW-0436">Ligase</keyword>
<keyword id="KW-0547">Nucleotide-binding</keyword>
<keyword id="KW-0648">Protein biosynthesis</keyword>
<keyword id="KW-1185">Reference proteome</keyword>
<reference key="1">
    <citation type="journal article" date="2003" name="Nat. Genet.">
        <title>Comparative analysis of the genome sequences of Bordetella pertussis, Bordetella parapertussis and Bordetella bronchiseptica.</title>
        <authorList>
            <person name="Parkhill J."/>
            <person name="Sebaihia M."/>
            <person name="Preston A."/>
            <person name="Murphy L.D."/>
            <person name="Thomson N.R."/>
            <person name="Harris D.E."/>
            <person name="Holden M.T.G."/>
            <person name="Churcher C.M."/>
            <person name="Bentley S.D."/>
            <person name="Mungall K.L."/>
            <person name="Cerdeno-Tarraga A.-M."/>
            <person name="Temple L."/>
            <person name="James K.D."/>
            <person name="Harris B."/>
            <person name="Quail M.A."/>
            <person name="Achtman M."/>
            <person name="Atkin R."/>
            <person name="Baker S."/>
            <person name="Basham D."/>
            <person name="Bason N."/>
            <person name="Cherevach I."/>
            <person name="Chillingworth T."/>
            <person name="Collins M."/>
            <person name="Cronin A."/>
            <person name="Davis P."/>
            <person name="Doggett J."/>
            <person name="Feltwell T."/>
            <person name="Goble A."/>
            <person name="Hamlin N."/>
            <person name="Hauser H."/>
            <person name="Holroyd S."/>
            <person name="Jagels K."/>
            <person name="Leather S."/>
            <person name="Moule S."/>
            <person name="Norberczak H."/>
            <person name="O'Neil S."/>
            <person name="Ormond D."/>
            <person name="Price C."/>
            <person name="Rabbinowitsch E."/>
            <person name="Rutter S."/>
            <person name="Sanders M."/>
            <person name="Saunders D."/>
            <person name="Seeger K."/>
            <person name="Sharp S."/>
            <person name="Simmonds M."/>
            <person name="Skelton J."/>
            <person name="Squares R."/>
            <person name="Squares S."/>
            <person name="Stevens K."/>
            <person name="Unwin L."/>
            <person name="Whitehead S."/>
            <person name="Barrell B.G."/>
            <person name="Maskell D.J."/>
        </authorList>
    </citation>
    <scope>NUCLEOTIDE SEQUENCE [LARGE SCALE GENOMIC DNA]</scope>
    <source>
        <strain>Tohama I / ATCC BAA-589 / NCTC 13251</strain>
    </source>
</reference>
<feature type="chain" id="PRO_0000110839" description="Aspartate--tRNA(Asp/Asn) ligase">
    <location>
        <begin position="1"/>
        <end position="596"/>
    </location>
</feature>
<feature type="region of interest" description="Aspartate" evidence="1">
    <location>
        <begin position="196"/>
        <end position="199"/>
    </location>
</feature>
<feature type="binding site" evidence="1">
    <location>
        <position position="172"/>
    </location>
    <ligand>
        <name>L-aspartate</name>
        <dbReference type="ChEBI" id="CHEBI:29991"/>
    </ligand>
</feature>
<feature type="binding site" evidence="1">
    <location>
        <begin position="218"/>
        <end position="220"/>
    </location>
    <ligand>
        <name>ATP</name>
        <dbReference type="ChEBI" id="CHEBI:30616"/>
    </ligand>
</feature>
<feature type="binding site" evidence="1">
    <location>
        <position position="218"/>
    </location>
    <ligand>
        <name>L-aspartate</name>
        <dbReference type="ChEBI" id="CHEBI:29991"/>
    </ligand>
</feature>
<feature type="binding site" evidence="1">
    <location>
        <position position="227"/>
    </location>
    <ligand>
        <name>ATP</name>
        <dbReference type="ChEBI" id="CHEBI:30616"/>
    </ligand>
</feature>
<feature type="binding site" evidence="1">
    <location>
        <position position="455"/>
    </location>
    <ligand>
        <name>L-aspartate</name>
        <dbReference type="ChEBI" id="CHEBI:29991"/>
    </ligand>
</feature>
<feature type="binding site" evidence="1">
    <location>
        <position position="489"/>
    </location>
    <ligand>
        <name>ATP</name>
        <dbReference type="ChEBI" id="CHEBI:30616"/>
    </ligand>
</feature>
<feature type="binding site" evidence="1">
    <location>
        <position position="496"/>
    </location>
    <ligand>
        <name>L-aspartate</name>
        <dbReference type="ChEBI" id="CHEBI:29991"/>
    </ligand>
</feature>
<feature type="binding site" evidence="1">
    <location>
        <begin position="541"/>
        <end position="544"/>
    </location>
    <ligand>
        <name>ATP</name>
        <dbReference type="ChEBI" id="CHEBI:30616"/>
    </ligand>
</feature>
<feature type="site" description="Important for tRNA non-discrimination" evidence="1">
    <location>
        <position position="30"/>
    </location>
</feature>
<feature type="site" description="Important for tRNA non-discrimination" evidence="1">
    <location>
        <position position="81"/>
    </location>
</feature>
<gene>
    <name evidence="1" type="primary">aspS</name>
    <name type="ordered locus">BP0709</name>
</gene>
<protein>
    <recommendedName>
        <fullName evidence="1">Aspartate--tRNA(Asp/Asn) ligase</fullName>
        <ecNumber evidence="1">6.1.1.23</ecNumber>
    </recommendedName>
    <alternativeName>
        <fullName evidence="1">Aspartyl-tRNA synthetase</fullName>
        <shortName evidence="1">AspRS</shortName>
    </alternativeName>
    <alternativeName>
        <fullName evidence="1">Non-discriminating aspartyl-tRNA synthetase</fullName>
        <shortName evidence="1">ND-AspRS</shortName>
    </alternativeName>
</protein>
<accession>Q7W001</accession>
<sequence length="596" mass="67165">MRTCYTGQVCRDHLGQTVTLYGWVNRRRDHGGVIFIDLRDRTGLAQIVFDPDNAEAFGTAERLRNEFCISITGLVRLRPEGTANAELASGEVEVLCQQVEILNASVTPPFQLDDDNLSETTRLTHRVLDLRRPQMQHNLMLRYRVSIEVRKYLDQLGFIDIETPMLTKSTPEGARDYLVPSRVNAGYFFALPQSPQLFKQMLMVSGFDRYYQITKCFRDEDLRADRQPEFTQIDCETSFLNEVEIREIFEGMIRHVFKVVQDVDLPTPFPIMSWTEAMQRYGSDKPDLRVNLEFTDMTDVMRDVDFKVFASAATTAGSRVVALRVQGGGEMSRSEIDAYTQFVGIYGAKGLAYIKVNDVAKGREGLQSPIVKNLHDAALAELVKRTGAQNGDIIFFGADRAKVVNDAIGALRVKIGHSEFGKKAGLFSGGWKPLWVVDFPMFEYDEEENRYTAAHHPFTSPKDGHEDFLESDPGKAVAKAYDMVLNGWEIGGGSVRIHREEVQSKVFRALKIDAEEAREKFGFLLDALQYGAPPHGGIAFGLDRIITMMAGAESIRDVIAFPKTQRAQCLLTGAPSEVDEKQLRELHIRLRNVEVK</sequence>
<name>SYDND_BORPE</name>
<dbReference type="EC" id="6.1.1.23" evidence="1"/>
<dbReference type="EMBL" id="BX640413">
    <property type="protein sequence ID" value="CAE41019.1"/>
    <property type="molecule type" value="Genomic_DNA"/>
</dbReference>
<dbReference type="RefSeq" id="NP_879539.1">
    <property type="nucleotide sequence ID" value="NC_002929.2"/>
</dbReference>
<dbReference type="RefSeq" id="WP_003807038.1">
    <property type="nucleotide sequence ID" value="NZ_CP039022.1"/>
</dbReference>
<dbReference type="SMR" id="Q7W001"/>
<dbReference type="STRING" id="257313.BP0709"/>
<dbReference type="PaxDb" id="257313-BP0709"/>
<dbReference type="GeneID" id="93206345"/>
<dbReference type="KEGG" id="bpe:BP0709"/>
<dbReference type="PATRIC" id="fig|257313.5.peg.758"/>
<dbReference type="eggNOG" id="COG0173">
    <property type="taxonomic scope" value="Bacteria"/>
</dbReference>
<dbReference type="HOGENOM" id="CLU_014330_3_2_4"/>
<dbReference type="Proteomes" id="UP000002676">
    <property type="component" value="Chromosome"/>
</dbReference>
<dbReference type="GO" id="GO:0005737">
    <property type="term" value="C:cytoplasm"/>
    <property type="evidence" value="ECO:0007669"/>
    <property type="project" value="UniProtKB-SubCell"/>
</dbReference>
<dbReference type="GO" id="GO:0004815">
    <property type="term" value="F:aspartate-tRNA ligase activity"/>
    <property type="evidence" value="ECO:0007669"/>
    <property type="project" value="UniProtKB-UniRule"/>
</dbReference>
<dbReference type="GO" id="GO:0050560">
    <property type="term" value="F:aspartate-tRNA(Asn) ligase activity"/>
    <property type="evidence" value="ECO:0007669"/>
    <property type="project" value="UniProtKB-EC"/>
</dbReference>
<dbReference type="GO" id="GO:0005524">
    <property type="term" value="F:ATP binding"/>
    <property type="evidence" value="ECO:0007669"/>
    <property type="project" value="UniProtKB-UniRule"/>
</dbReference>
<dbReference type="GO" id="GO:0003676">
    <property type="term" value="F:nucleic acid binding"/>
    <property type="evidence" value="ECO:0007669"/>
    <property type="project" value="InterPro"/>
</dbReference>
<dbReference type="GO" id="GO:0006422">
    <property type="term" value="P:aspartyl-tRNA aminoacylation"/>
    <property type="evidence" value="ECO:0007669"/>
    <property type="project" value="UniProtKB-UniRule"/>
</dbReference>
<dbReference type="CDD" id="cd00777">
    <property type="entry name" value="AspRS_core"/>
    <property type="match status" value="1"/>
</dbReference>
<dbReference type="CDD" id="cd04317">
    <property type="entry name" value="EcAspRS_like_N"/>
    <property type="match status" value="1"/>
</dbReference>
<dbReference type="Gene3D" id="3.30.930.10">
    <property type="entry name" value="Bira Bifunctional Protein, Domain 2"/>
    <property type="match status" value="1"/>
</dbReference>
<dbReference type="Gene3D" id="3.30.1360.30">
    <property type="entry name" value="GAD-like domain"/>
    <property type="match status" value="1"/>
</dbReference>
<dbReference type="Gene3D" id="2.40.50.140">
    <property type="entry name" value="Nucleic acid-binding proteins"/>
    <property type="match status" value="1"/>
</dbReference>
<dbReference type="HAMAP" id="MF_00044">
    <property type="entry name" value="Asp_tRNA_synth_type1"/>
    <property type="match status" value="1"/>
</dbReference>
<dbReference type="InterPro" id="IPR004364">
    <property type="entry name" value="Aa-tRNA-synt_II"/>
</dbReference>
<dbReference type="InterPro" id="IPR006195">
    <property type="entry name" value="aa-tRNA-synth_II"/>
</dbReference>
<dbReference type="InterPro" id="IPR045864">
    <property type="entry name" value="aa-tRNA-synth_II/BPL/LPL"/>
</dbReference>
<dbReference type="InterPro" id="IPR004524">
    <property type="entry name" value="Asp-tRNA-ligase_1"/>
</dbReference>
<dbReference type="InterPro" id="IPR047089">
    <property type="entry name" value="Asp-tRNA-ligase_1_N"/>
</dbReference>
<dbReference type="InterPro" id="IPR002312">
    <property type="entry name" value="Asp/Asn-tRNA-synth_IIb"/>
</dbReference>
<dbReference type="InterPro" id="IPR047090">
    <property type="entry name" value="AspRS_core"/>
</dbReference>
<dbReference type="InterPro" id="IPR004115">
    <property type="entry name" value="GAD-like_sf"/>
</dbReference>
<dbReference type="InterPro" id="IPR029351">
    <property type="entry name" value="GAD_dom"/>
</dbReference>
<dbReference type="InterPro" id="IPR012340">
    <property type="entry name" value="NA-bd_OB-fold"/>
</dbReference>
<dbReference type="InterPro" id="IPR004365">
    <property type="entry name" value="NA-bd_OB_tRNA"/>
</dbReference>
<dbReference type="NCBIfam" id="TIGR00459">
    <property type="entry name" value="aspS_bact"/>
    <property type="match status" value="1"/>
</dbReference>
<dbReference type="NCBIfam" id="NF001750">
    <property type="entry name" value="PRK00476.1"/>
    <property type="match status" value="1"/>
</dbReference>
<dbReference type="PANTHER" id="PTHR22594:SF5">
    <property type="entry name" value="ASPARTATE--TRNA LIGASE, MITOCHONDRIAL"/>
    <property type="match status" value="1"/>
</dbReference>
<dbReference type="PANTHER" id="PTHR22594">
    <property type="entry name" value="ASPARTYL/LYSYL-TRNA SYNTHETASE"/>
    <property type="match status" value="1"/>
</dbReference>
<dbReference type="Pfam" id="PF02938">
    <property type="entry name" value="GAD"/>
    <property type="match status" value="1"/>
</dbReference>
<dbReference type="Pfam" id="PF00152">
    <property type="entry name" value="tRNA-synt_2"/>
    <property type="match status" value="1"/>
</dbReference>
<dbReference type="Pfam" id="PF01336">
    <property type="entry name" value="tRNA_anti-codon"/>
    <property type="match status" value="1"/>
</dbReference>
<dbReference type="PRINTS" id="PR01042">
    <property type="entry name" value="TRNASYNTHASP"/>
</dbReference>
<dbReference type="SUPFAM" id="SSF55681">
    <property type="entry name" value="Class II aaRS and biotin synthetases"/>
    <property type="match status" value="1"/>
</dbReference>
<dbReference type="SUPFAM" id="SSF55261">
    <property type="entry name" value="GAD domain-like"/>
    <property type="match status" value="1"/>
</dbReference>
<dbReference type="SUPFAM" id="SSF50249">
    <property type="entry name" value="Nucleic acid-binding proteins"/>
    <property type="match status" value="1"/>
</dbReference>
<dbReference type="PROSITE" id="PS50862">
    <property type="entry name" value="AA_TRNA_LIGASE_II"/>
    <property type="match status" value="1"/>
</dbReference>